<sequence>MLDLKRIRTDFDTVAAKLKNRGVSEDTLTHLKELDEKRRTLLVQSEELKAERNIASAAIAQAKRQKEDATQQIADMQKVSADIKTIDNQLVAIDQQVTDIITVLPNTPHDSVPVGADEEDNVEIRRWGTPRDFNFEVKAHWDLGEDLDILDWERGAKVTGARFLFYKNLGARLERALYNFMLDEHIKEGYQEIITPYMVNHDSMFGTGQYPKFKEDTFELADTNFVLIPTAEVPLTNYYRGEILDGKELPIYFTAMSPSFRSEAGSAGRDTRGLIRLHQFHKVEMVKFAKPEESYQELEKMTANAENILQKLGLPYRVISLCTGDMGFSAAKTYDLEVWIPAQNTYREISSCSNTEDFQARRAQIRYRDEADGKVKLLHTLNGSGLAVGRTVAAILENYQNEDGSVTIPEVLRPYMGGETVISPK</sequence>
<accession>Q1JKF1</accession>
<name>SYS_STRPC</name>
<protein>
    <recommendedName>
        <fullName evidence="1">Serine--tRNA ligase</fullName>
        <ecNumber evidence="1">6.1.1.11</ecNumber>
    </recommendedName>
    <alternativeName>
        <fullName evidence="1">Seryl-tRNA synthetase</fullName>
        <shortName evidence="1">SerRS</shortName>
    </alternativeName>
    <alternativeName>
        <fullName evidence="1">Seryl-tRNA(Ser/Sec) synthetase</fullName>
    </alternativeName>
</protein>
<comment type="function">
    <text evidence="1">Catalyzes the attachment of serine to tRNA(Ser). Is also able to aminoacylate tRNA(Sec) with serine, to form the misacylated tRNA L-seryl-tRNA(Sec), which will be further converted into selenocysteinyl-tRNA(Sec).</text>
</comment>
<comment type="catalytic activity">
    <reaction evidence="1">
        <text>tRNA(Ser) + L-serine + ATP = L-seryl-tRNA(Ser) + AMP + diphosphate + H(+)</text>
        <dbReference type="Rhea" id="RHEA:12292"/>
        <dbReference type="Rhea" id="RHEA-COMP:9669"/>
        <dbReference type="Rhea" id="RHEA-COMP:9703"/>
        <dbReference type="ChEBI" id="CHEBI:15378"/>
        <dbReference type="ChEBI" id="CHEBI:30616"/>
        <dbReference type="ChEBI" id="CHEBI:33019"/>
        <dbReference type="ChEBI" id="CHEBI:33384"/>
        <dbReference type="ChEBI" id="CHEBI:78442"/>
        <dbReference type="ChEBI" id="CHEBI:78533"/>
        <dbReference type="ChEBI" id="CHEBI:456215"/>
        <dbReference type="EC" id="6.1.1.11"/>
    </reaction>
</comment>
<comment type="catalytic activity">
    <reaction evidence="1">
        <text>tRNA(Sec) + L-serine + ATP = L-seryl-tRNA(Sec) + AMP + diphosphate + H(+)</text>
        <dbReference type="Rhea" id="RHEA:42580"/>
        <dbReference type="Rhea" id="RHEA-COMP:9742"/>
        <dbReference type="Rhea" id="RHEA-COMP:10128"/>
        <dbReference type="ChEBI" id="CHEBI:15378"/>
        <dbReference type="ChEBI" id="CHEBI:30616"/>
        <dbReference type="ChEBI" id="CHEBI:33019"/>
        <dbReference type="ChEBI" id="CHEBI:33384"/>
        <dbReference type="ChEBI" id="CHEBI:78442"/>
        <dbReference type="ChEBI" id="CHEBI:78533"/>
        <dbReference type="ChEBI" id="CHEBI:456215"/>
        <dbReference type="EC" id="6.1.1.11"/>
    </reaction>
</comment>
<comment type="pathway">
    <text evidence="1">Aminoacyl-tRNA biosynthesis; selenocysteinyl-tRNA(Sec) biosynthesis; L-seryl-tRNA(Sec) from L-serine and tRNA(Sec): step 1/1.</text>
</comment>
<comment type="subunit">
    <text evidence="1">Homodimer. The tRNA molecule binds across the dimer.</text>
</comment>
<comment type="subcellular location">
    <subcellularLocation>
        <location evidence="1">Cytoplasm</location>
    </subcellularLocation>
</comment>
<comment type="domain">
    <text evidence="1">Consists of two distinct domains, a catalytic core and a N-terminal extension that is involved in tRNA binding.</text>
</comment>
<comment type="similarity">
    <text evidence="1">Belongs to the class-II aminoacyl-tRNA synthetase family. Type-1 seryl-tRNA synthetase subfamily.</text>
</comment>
<gene>
    <name evidence="1" type="primary">serS</name>
    <name type="ordered locus">MGAS9429_Spy1485</name>
</gene>
<reference key="1">
    <citation type="journal article" date="2006" name="Proc. Natl. Acad. Sci. U.S.A.">
        <title>Molecular genetic anatomy of inter- and intraserotype variation in the human bacterial pathogen group A Streptococcus.</title>
        <authorList>
            <person name="Beres S.B."/>
            <person name="Richter E.W."/>
            <person name="Nagiec M.J."/>
            <person name="Sumby P."/>
            <person name="Porcella S.F."/>
            <person name="DeLeo F.R."/>
            <person name="Musser J.M."/>
        </authorList>
    </citation>
    <scope>NUCLEOTIDE SEQUENCE [LARGE SCALE GENOMIC DNA]</scope>
    <source>
        <strain>MGAS9429</strain>
    </source>
</reference>
<proteinExistence type="inferred from homology"/>
<evidence type="ECO:0000255" key="1">
    <source>
        <dbReference type="HAMAP-Rule" id="MF_00176"/>
    </source>
</evidence>
<feature type="chain" id="PRO_1000019838" description="Serine--tRNA ligase">
    <location>
        <begin position="1"/>
        <end position="425"/>
    </location>
</feature>
<feature type="binding site" evidence="1">
    <location>
        <begin position="230"/>
        <end position="232"/>
    </location>
    <ligand>
        <name>L-serine</name>
        <dbReference type="ChEBI" id="CHEBI:33384"/>
    </ligand>
</feature>
<feature type="binding site" evidence="1">
    <location>
        <begin position="261"/>
        <end position="263"/>
    </location>
    <ligand>
        <name>ATP</name>
        <dbReference type="ChEBI" id="CHEBI:30616"/>
    </ligand>
</feature>
<feature type="binding site" evidence="1">
    <location>
        <position position="284"/>
    </location>
    <ligand>
        <name>L-serine</name>
        <dbReference type="ChEBI" id="CHEBI:33384"/>
    </ligand>
</feature>
<feature type="binding site" evidence="1">
    <location>
        <begin position="348"/>
        <end position="351"/>
    </location>
    <ligand>
        <name>ATP</name>
        <dbReference type="ChEBI" id="CHEBI:30616"/>
    </ligand>
</feature>
<feature type="binding site" evidence="1">
    <location>
        <position position="384"/>
    </location>
    <ligand>
        <name>L-serine</name>
        <dbReference type="ChEBI" id="CHEBI:33384"/>
    </ligand>
</feature>
<keyword id="KW-0030">Aminoacyl-tRNA synthetase</keyword>
<keyword id="KW-0067">ATP-binding</keyword>
<keyword id="KW-0963">Cytoplasm</keyword>
<keyword id="KW-0436">Ligase</keyword>
<keyword id="KW-0547">Nucleotide-binding</keyword>
<keyword id="KW-0648">Protein biosynthesis</keyword>
<organism>
    <name type="scientific">Streptococcus pyogenes serotype M12 (strain MGAS9429)</name>
    <dbReference type="NCBI Taxonomy" id="370551"/>
    <lineage>
        <taxon>Bacteria</taxon>
        <taxon>Bacillati</taxon>
        <taxon>Bacillota</taxon>
        <taxon>Bacilli</taxon>
        <taxon>Lactobacillales</taxon>
        <taxon>Streptococcaceae</taxon>
        <taxon>Streptococcus</taxon>
    </lineage>
</organism>
<dbReference type="EC" id="6.1.1.11" evidence="1"/>
<dbReference type="EMBL" id="CP000259">
    <property type="protein sequence ID" value="ABF32672.1"/>
    <property type="molecule type" value="Genomic_DNA"/>
</dbReference>
<dbReference type="RefSeq" id="WP_002988632.1">
    <property type="nucleotide sequence ID" value="NC_008021.1"/>
</dbReference>
<dbReference type="SMR" id="Q1JKF1"/>
<dbReference type="KEGG" id="spk:MGAS9429_Spy1485"/>
<dbReference type="HOGENOM" id="CLU_023797_1_1_9"/>
<dbReference type="UniPathway" id="UPA00906">
    <property type="reaction ID" value="UER00895"/>
</dbReference>
<dbReference type="Proteomes" id="UP000002433">
    <property type="component" value="Chromosome"/>
</dbReference>
<dbReference type="GO" id="GO:0005737">
    <property type="term" value="C:cytoplasm"/>
    <property type="evidence" value="ECO:0007669"/>
    <property type="project" value="UniProtKB-SubCell"/>
</dbReference>
<dbReference type="GO" id="GO:0005524">
    <property type="term" value="F:ATP binding"/>
    <property type="evidence" value="ECO:0007669"/>
    <property type="project" value="UniProtKB-UniRule"/>
</dbReference>
<dbReference type="GO" id="GO:0140096">
    <property type="term" value="F:catalytic activity, acting on a protein"/>
    <property type="evidence" value="ECO:0007669"/>
    <property type="project" value="UniProtKB-ARBA"/>
</dbReference>
<dbReference type="GO" id="GO:0004828">
    <property type="term" value="F:serine-tRNA ligase activity"/>
    <property type="evidence" value="ECO:0007669"/>
    <property type="project" value="UniProtKB-UniRule"/>
</dbReference>
<dbReference type="GO" id="GO:0016740">
    <property type="term" value="F:transferase activity"/>
    <property type="evidence" value="ECO:0007669"/>
    <property type="project" value="UniProtKB-ARBA"/>
</dbReference>
<dbReference type="GO" id="GO:0016260">
    <property type="term" value="P:selenocysteine biosynthetic process"/>
    <property type="evidence" value="ECO:0007669"/>
    <property type="project" value="UniProtKB-UniRule"/>
</dbReference>
<dbReference type="GO" id="GO:0006434">
    <property type="term" value="P:seryl-tRNA aminoacylation"/>
    <property type="evidence" value="ECO:0007669"/>
    <property type="project" value="UniProtKB-UniRule"/>
</dbReference>
<dbReference type="CDD" id="cd00770">
    <property type="entry name" value="SerRS_core"/>
    <property type="match status" value="1"/>
</dbReference>
<dbReference type="Gene3D" id="3.30.930.10">
    <property type="entry name" value="Bira Bifunctional Protein, Domain 2"/>
    <property type="match status" value="1"/>
</dbReference>
<dbReference type="Gene3D" id="1.10.287.40">
    <property type="entry name" value="Serine-tRNA synthetase, tRNA binding domain"/>
    <property type="match status" value="1"/>
</dbReference>
<dbReference type="HAMAP" id="MF_00176">
    <property type="entry name" value="Ser_tRNA_synth_type1"/>
    <property type="match status" value="1"/>
</dbReference>
<dbReference type="InterPro" id="IPR002314">
    <property type="entry name" value="aa-tRNA-synt_IIb"/>
</dbReference>
<dbReference type="InterPro" id="IPR006195">
    <property type="entry name" value="aa-tRNA-synth_II"/>
</dbReference>
<dbReference type="InterPro" id="IPR045864">
    <property type="entry name" value="aa-tRNA-synth_II/BPL/LPL"/>
</dbReference>
<dbReference type="InterPro" id="IPR002317">
    <property type="entry name" value="Ser-tRNA-ligase_type_1"/>
</dbReference>
<dbReference type="InterPro" id="IPR015866">
    <property type="entry name" value="Ser-tRNA-synth_1_N"/>
</dbReference>
<dbReference type="InterPro" id="IPR042103">
    <property type="entry name" value="SerRS_1_N_sf"/>
</dbReference>
<dbReference type="InterPro" id="IPR033729">
    <property type="entry name" value="SerRS_core"/>
</dbReference>
<dbReference type="InterPro" id="IPR010978">
    <property type="entry name" value="tRNA-bd_arm"/>
</dbReference>
<dbReference type="NCBIfam" id="TIGR00414">
    <property type="entry name" value="serS"/>
    <property type="match status" value="1"/>
</dbReference>
<dbReference type="PANTHER" id="PTHR43697:SF1">
    <property type="entry name" value="SERINE--TRNA LIGASE"/>
    <property type="match status" value="1"/>
</dbReference>
<dbReference type="PANTHER" id="PTHR43697">
    <property type="entry name" value="SERYL-TRNA SYNTHETASE"/>
    <property type="match status" value="1"/>
</dbReference>
<dbReference type="Pfam" id="PF02403">
    <property type="entry name" value="Seryl_tRNA_N"/>
    <property type="match status" value="1"/>
</dbReference>
<dbReference type="Pfam" id="PF00587">
    <property type="entry name" value="tRNA-synt_2b"/>
    <property type="match status" value="1"/>
</dbReference>
<dbReference type="PIRSF" id="PIRSF001529">
    <property type="entry name" value="Ser-tRNA-synth_IIa"/>
    <property type="match status" value="1"/>
</dbReference>
<dbReference type="PRINTS" id="PR00981">
    <property type="entry name" value="TRNASYNTHSER"/>
</dbReference>
<dbReference type="SUPFAM" id="SSF55681">
    <property type="entry name" value="Class II aaRS and biotin synthetases"/>
    <property type="match status" value="1"/>
</dbReference>
<dbReference type="SUPFAM" id="SSF46589">
    <property type="entry name" value="tRNA-binding arm"/>
    <property type="match status" value="1"/>
</dbReference>
<dbReference type="PROSITE" id="PS50862">
    <property type="entry name" value="AA_TRNA_LIGASE_II"/>
    <property type="match status" value="1"/>
</dbReference>